<feature type="chain" id="PRO_0000154399" description="N-(5'-phosphoribosyl)anthranilate isomerase">
    <location>
        <begin position="1"/>
        <end position="214"/>
    </location>
</feature>
<keyword id="KW-0028">Amino-acid biosynthesis</keyword>
<keyword id="KW-0057">Aromatic amino acid biosynthesis</keyword>
<keyword id="KW-0413">Isomerase</keyword>
<keyword id="KW-1185">Reference proteome</keyword>
<keyword id="KW-0822">Tryptophan biosynthesis</keyword>
<evidence type="ECO:0000255" key="1">
    <source>
        <dbReference type="HAMAP-Rule" id="MF_00135"/>
    </source>
</evidence>
<reference key="1">
    <citation type="journal article" date="2004" name="Genome Res.">
        <title>Genome sequence of Haloarcula marismortui: a halophilic archaeon from the Dead Sea.</title>
        <authorList>
            <person name="Baliga N.S."/>
            <person name="Bonneau R."/>
            <person name="Facciotti M.T."/>
            <person name="Pan M."/>
            <person name="Glusman G."/>
            <person name="Deutsch E.W."/>
            <person name="Shannon P."/>
            <person name="Chiu Y."/>
            <person name="Weng R.S."/>
            <person name="Gan R.R."/>
            <person name="Hung P."/>
            <person name="Date S.V."/>
            <person name="Marcotte E."/>
            <person name="Hood L."/>
            <person name="Ng W.V."/>
        </authorList>
    </citation>
    <scope>NUCLEOTIDE SEQUENCE [LARGE SCALE GENOMIC DNA]</scope>
    <source>
        <strain>ATCC 43049 / DSM 3752 / JCM 8966 / VKM B-1809</strain>
    </source>
</reference>
<protein>
    <recommendedName>
        <fullName evidence="1">N-(5'-phosphoribosyl)anthranilate isomerase</fullName>
        <shortName evidence="1">PRAI</shortName>
        <ecNumber evidence="1">5.3.1.24</ecNumber>
    </recommendedName>
</protein>
<proteinExistence type="inferred from homology"/>
<dbReference type="EC" id="5.3.1.24" evidence="1"/>
<dbReference type="EMBL" id="AY596297">
    <property type="protein sequence ID" value="AAV46440.1"/>
    <property type="molecule type" value="Genomic_DNA"/>
</dbReference>
<dbReference type="RefSeq" id="WP_011223673.1">
    <property type="nucleotide sequence ID" value="NC_006396.1"/>
</dbReference>
<dbReference type="SMR" id="Q5V212"/>
<dbReference type="STRING" id="272569.rrnAC1519"/>
<dbReference type="PaxDb" id="272569-rrnAC1519"/>
<dbReference type="EnsemblBacteria" id="AAV46440">
    <property type="protein sequence ID" value="AAV46440"/>
    <property type="gene ID" value="rrnAC1519"/>
</dbReference>
<dbReference type="GeneID" id="40152481"/>
<dbReference type="KEGG" id="hma:rrnAC1519"/>
<dbReference type="PATRIC" id="fig|272569.17.peg.2208"/>
<dbReference type="eggNOG" id="arCOG01983">
    <property type="taxonomic scope" value="Archaea"/>
</dbReference>
<dbReference type="HOGENOM" id="CLU_076364_2_1_2"/>
<dbReference type="UniPathway" id="UPA00035">
    <property type="reaction ID" value="UER00042"/>
</dbReference>
<dbReference type="Proteomes" id="UP000001169">
    <property type="component" value="Chromosome I"/>
</dbReference>
<dbReference type="GO" id="GO:0004640">
    <property type="term" value="F:phosphoribosylanthranilate isomerase activity"/>
    <property type="evidence" value="ECO:0007669"/>
    <property type="project" value="UniProtKB-UniRule"/>
</dbReference>
<dbReference type="GO" id="GO:0000162">
    <property type="term" value="P:L-tryptophan biosynthetic process"/>
    <property type="evidence" value="ECO:0007669"/>
    <property type="project" value="UniProtKB-UniRule"/>
</dbReference>
<dbReference type="CDD" id="cd00405">
    <property type="entry name" value="PRAI"/>
    <property type="match status" value="1"/>
</dbReference>
<dbReference type="Gene3D" id="3.20.20.70">
    <property type="entry name" value="Aldolase class I"/>
    <property type="match status" value="1"/>
</dbReference>
<dbReference type="HAMAP" id="MF_00135">
    <property type="entry name" value="PRAI"/>
    <property type="match status" value="1"/>
</dbReference>
<dbReference type="InterPro" id="IPR013785">
    <property type="entry name" value="Aldolase_TIM"/>
</dbReference>
<dbReference type="InterPro" id="IPR001240">
    <property type="entry name" value="PRAI_dom"/>
</dbReference>
<dbReference type="InterPro" id="IPR011060">
    <property type="entry name" value="RibuloseP-bd_barrel"/>
</dbReference>
<dbReference type="InterPro" id="IPR044643">
    <property type="entry name" value="TrpF_fam"/>
</dbReference>
<dbReference type="PANTHER" id="PTHR42894">
    <property type="entry name" value="N-(5'-PHOSPHORIBOSYL)ANTHRANILATE ISOMERASE"/>
    <property type="match status" value="1"/>
</dbReference>
<dbReference type="PANTHER" id="PTHR42894:SF1">
    <property type="entry name" value="N-(5'-PHOSPHORIBOSYL)ANTHRANILATE ISOMERASE"/>
    <property type="match status" value="1"/>
</dbReference>
<dbReference type="Pfam" id="PF00697">
    <property type="entry name" value="PRAI"/>
    <property type="match status" value="1"/>
</dbReference>
<dbReference type="SUPFAM" id="SSF51366">
    <property type="entry name" value="Ribulose-phoshate binding barrel"/>
    <property type="match status" value="1"/>
</dbReference>
<comment type="catalytic activity">
    <reaction evidence="1">
        <text>N-(5-phospho-beta-D-ribosyl)anthranilate = 1-(2-carboxyphenylamino)-1-deoxy-D-ribulose 5-phosphate</text>
        <dbReference type="Rhea" id="RHEA:21540"/>
        <dbReference type="ChEBI" id="CHEBI:18277"/>
        <dbReference type="ChEBI" id="CHEBI:58613"/>
        <dbReference type="EC" id="5.3.1.24"/>
    </reaction>
</comment>
<comment type="pathway">
    <text evidence="1">Amino-acid biosynthesis; L-tryptophan biosynthesis; L-tryptophan from chorismate: step 3/5.</text>
</comment>
<comment type="similarity">
    <text evidence="1">Belongs to the TrpF family.</text>
</comment>
<sequence length="214" mass="22224">MTRVKICGVTDTEDRDAVVTAGADAVGIIHGVPVDTPREVDEGTAETIADGVPPFVTSVLVMMPTTVQEAVRRIDRIEPDAVQVHDGLSPAELGALNNRITQDIVAVVEADAPAIEDYATHADALLVDSVDADGGGGTGETHDWERTRDLVDSLDVPIVLAGGLTPENVTEAVETVEPFAVDVASGVESAGGTKDHDAVGRFVRNAKQAPEGAV</sequence>
<organism>
    <name type="scientific">Haloarcula marismortui (strain ATCC 43049 / DSM 3752 / JCM 8966 / VKM B-1809)</name>
    <name type="common">Halobacterium marismortui</name>
    <dbReference type="NCBI Taxonomy" id="272569"/>
    <lineage>
        <taxon>Archaea</taxon>
        <taxon>Methanobacteriati</taxon>
        <taxon>Methanobacteriota</taxon>
        <taxon>Stenosarchaea group</taxon>
        <taxon>Halobacteria</taxon>
        <taxon>Halobacteriales</taxon>
        <taxon>Haloarculaceae</taxon>
        <taxon>Haloarcula</taxon>
    </lineage>
</organism>
<gene>
    <name evidence="1" type="primary">trpF</name>
    <name type="ordered locus">rrnAC1519</name>
</gene>
<accession>Q5V212</accession>
<name>TRPF_HALMA</name>